<dbReference type="EC" id="2.7.4.3" evidence="1"/>
<dbReference type="EMBL" id="BA000012">
    <property type="protein sequence ID" value="BAB47927.1"/>
    <property type="molecule type" value="Genomic_DNA"/>
</dbReference>
<dbReference type="RefSeq" id="WP_010909288.1">
    <property type="nucleotide sequence ID" value="NC_002678.2"/>
</dbReference>
<dbReference type="SMR" id="Q98N36"/>
<dbReference type="KEGG" id="mlo:mlr0322"/>
<dbReference type="PATRIC" id="fig|266835.9.peg.250"/>
<dbReference type="eggNOG" id="COG0563">
    <property type="taxonomic scope" value="Bacteria"/>
</dbReference>
<dbReference type="HOGENOM" id="CLU_032354_4_1_5"/>
<dbReference type="UniPathway" id="UPA00588">
    <property type="reaction ID" value="UER00649"/>
</dbReference>
<dbReference type="Proteomes" id="UP000000552">
    <property type="component" value="Chromosome"/>
</dbReference>
<dbReference type="GO" id="GO:0005737">
    <property type="term" value="C:cytoplasm"/>
    <property type="evidence" value="ECO:0007669"/>
    <property type="project" value="UniProtKB-SubCell"/>
</dbReference>
<dbReference type="GO" id="GO:0004017">
    <property type="term" value="F:adenylate kinase activity"/>
    <property type="evidence" value="ECO:0007669"/>
    <property type="project" value="UniProtKB-UniRule"/>
</dbReference>
<dbReference type="GO" id="GO:0005524">
    <property type="term" value="F:ATP binding"/>
    <property type="evidence" value="ECO:0007669"/>
    <property type="project" value="UniProtKB-UniRule"/>
</dbReference>
<dbReference type="GO" id="GO:0044209">
    <property type="term" value="P:AMP salvage"/>
    <property type="evidence" value="ECO:0007669"/>
    <property type="project" value="UniProtKB-UniRule"/>
</dbReference>
<dbReference type="CDD" id="cd01428">
    <property type="entry name" value="ADK"/>
    <property type="match status" value="1"/>
</dbReference>
<dbReference type="Gene3D" id="3.40.50.300">
    <property type="entry name" value="P-loop containing nucleotide triphosphate hydrolases"/>
    <property type="match status" value="1"/>
</dbReference>
<dbReference type="HAMAP" id="MF_00235">
    <property type="entry name" value="Adenylate_kinase_Adk"/>
    <property type="match status" value="1"/>
</dbReference>
<dbReference type="InterPro" id="IPR006259">
    <property type="entry name" value="Adenyl_kin_sub"/>
</dbReference>
<dbReference type="InterPro" id="IPR000850">
    <property type="entry name" value="Adenylat/UMP-CMP_kin"/>
</dbReference>
<dbReference type="InterPro" id="IPR033690">
    <property type="entry name" value="Adenylat_kinase_CS"/>
</dbReference>
<dbReference type="InterPro" id="IPR027417">
    <property type="entry name" value="P-loop_NTPase"/>
</dbReference>
<dbReference type="NCBIfam" id="TIGR01351">
    <property type="entry name" value="adk"/>
    <property type="match status" value="1"/>
</dbReference>
<dbReference type="NCBIfam" id="NF001381">
    <property type="entry name" value="PRK00279.1-3"/>
    <property type="match status" value="1"/>
</dbReference>
<dbReference type="NCBIfam" id="NF011100">
    <property type="entry name" value="PRK14527.1"/>
    <property type="match status" value="1"/>
</dbReference>
<dbReference type="NCBIfam" id="NF011101">
    <property type="entry name" value="PRK14528.1"/>
    <property type="match status" value="1"/>
</dbReference>
<dbReference type="NCBIfam" id="NF011104">
    <property type="entry name" value="PRK14531.1"/>
    <property type="match status" value="1"/>
</dbReference>
<dbReference type="NCBIfam" id="NF011105">
    <property type="entry name" value="PRK14532.1"/>
    <property type="match status" value="1"/>
</dbReference>
<dbReference type="PANTHER" id="PTHR23359">
    <property type="entry name" value="NUCLEOTIDE KINASE"/>
    <property type="match status" value="1"/>
</dbReference>
<dbReference type="Pfam" id="PF00406">
    <property type="entry name" value="ADK"/>
    <property type="match status" value="1"/>
</dbReference>
<dbReference type="PRINTS" id="PR00094">
    <property type="entry name" value="ADENYLTKNASE"/>
</dbReference>
<dbReference type="SUPFAM" id="SSF52540">
    <property type="entry name" value="P-loop containing nucleoside triphosphate hydrolases"/>
    <property type="match status" value="1"/>
</dbReference>
<dbReference type="PROSITE" id="PS00113">
    <property type="entry name" value="ADENYLATE_KINASE"/>
    <property type="match status" value="1"/>
</dbReference>
<comment type="function">
    <text evidence="1">Catalyzes the reversible transfer of the terminal phosphate group between ATP and AMP. Plays an important role in cellular energy homeostasis and in adenine nucleotide metabolism.</text>
</comment>
<comment type="catalytic activity">
    <reaction evidence="1">
        <text>AMP + ATP = 2 ADP</text>
        <dbReference type="Rhea" id="RHEA:12973"/>
        <dbReference type="ChEBI" id="CHEBI:30616"/>
        <dbReference type="ChEBI" id="CHEBI:456215"/>
        <dbReference type="ChEBI" id="CHEBI:456216"/>
        <dbReference type="EC" id="2.7.4.3"/>
    </reaction>
</comment>
<comment type="pathway">
    <text evidence="1">Purine metabolism; AMP biosynthesis via salvage pathway; AMP from ADP: step 1/1.</text>
</comment>
<comment type="subunit">
    <text evidence="1">Monomer.</text>
</comment>
<comment type="subcellular location">
    <subcellularLocation>
        <location evidence="1">Cytoplasm</location>
    </subcellularLocation>
</comment>
<comment type="domain">
    <text evidence="1">Consists of three domains, a large central CORE domain and two small peripheral domains, NMPbind and LID, which undergo movements during catalysis. The LID domain closes over the site of phosphoryl transfer upon ATP binding. Assembling and dissambling the active center during each catalytic cycle provides an effective means to prevent ATP hydrolysis.</text>
</comment>
<comment type="similarity">
    <text evidence="1">Belongs to the adenylate kinase family.</text>
</comment>
<accession>Q98N36</accession>
<protein>
    <recommendedName>
        <fullName evidence="1">Adenylate kinase</fullName>
        <shortName evidence="1">AK</shortName>
        <ecNumber evidence="1">2.7.4.3</ecNumber>
    </recommendedName>
    <alternativeName>
        <fullName evidence="1">ATP-AMP transphosphorylase</fullName>
    </alternativeName>
    <alternativeName>
        <fullName evidence="1">ATP:AMP phosphotransferase</fullName>
    </alternativeName>
    <alternativeName>
        <fullName evidence="1">Adenylate monophosphate kinase</fullName>
    </alternativeName>
</protein>
<keyword id="KW-0067">ATP-binding</keyword>
<keyword id="KW-0963">Cytoplasm</keyword>
<keyword id="KW-0418">Kinase</keyword>
<keyword id="KW-0545">Nucleotide biosynthesis</keyword>
<keyword id="KW-0547">Nucleotide-binding</keyword>
<keyword id="KW-0808">Transferase</keyword>
<sequence>MRLILLGPPGAGKGTQAQRLVEKHGIPQLSTGDMLRAAVQAGSEVGKRAKAVMDAGELVSDAIVNAIVAERIDQADCAKGFILDGYPRTLVQADAVESMLSERGIGLDTVIELVVDDRALVGRIVKRAEDAKAAGQPVRKDDNPAVFEERLREYYKKTAPLTGYYYAKGKLKTVDGLASIDAVTNEIEAVLTAAAEAR</sequence>
<organism>
    <name type="scientific">Mesorhizobium japonicum (strain LMG 29417 / CECT 9101 / MAFF 303099)</name>
    <name type="common">Mesorhizobium loti (strain MAFF 303099)</name>
    <dbReference type="NCBI Taxonomy" id="266835"/>
    <lineage>
        <taxon>Bacteria</taxon>
        <taxon>Pseudomonadati</taxon>
        <taxon>Pseudomonadota</taxon>
        <taxon>Alphaproteobacteria</taxon>
        <taxon>Hyphomicrobiales</taxon>
        <taxon>Phyllobacteriaceae</taxon>
        <taxon>Mesorhizobium</taxon>
    </lineage>
</organism>
<name>KAD_RHILO</name>
<evidence type="ECO:0000255" key="1">
    <source>
        <dbReference type="HAMAP-Rule" id="MF_00235"/>
    </source>
</evidence>
<gene>
    <name evidence="1" type="primary">adk</name>
    <name type="ordered locus">mlr0322</name>
</gene>
<feature type="chain" id="PRO_0000158835" description="Adenylate kinase">
    <location>
        <begin position="1"/>
        <end position="198"/>
    </location>
</feature>
<feature type="region of interest" description="NMP" evidence="1">
    <location>
        <begin position="30"/>
        <end position="59"/>
    </location>
</feature>
<feature type="region of interest" description="LID" evidence="1">
    <location>
        <begin position="126"/>
        <end position="142"/>
    </location>
</feature>
<feature type="binding site" evidence="1">
    <location>
        <begin position="10"/>
        <end position="15"/>
    </location>
    <ligand>
        <name>ATP</name>
        <dbReference type="ChEBI" id="CHEBI:30616"/>
    </ligand>
</feature>
<feature type="binding site" evidence="1">
    <location>
        <position position="31"/>
    </location>
    <ligand>
        <name>AMP</name>
        <dbReference type="ChEBI" id="CHEBI:456215"/>
    </ligand>
</feature>
<feature type="binding site" evidence="1">
    <location>
        <position position="36"/>
    </location>
    <ligand>
        <name>AMP</name>
        <dbReference type="ChEBI" id="CHEBI:456215"/>
    </ligand>
</feature>
<feature type="binding site" evidence="1">
    <location>
        <begin position="57"/>
        <end position="59"/>
    </location>
    <ligand>
        <name>AMP</name>
        <dbReference type="ChEBI" id="CHEBI:456215"/>
    </ligand>
</feature>
<feature type="binding site" evidence="1">
    <location>
        <begin position="85"/>
        <end position="88"/>
    </location>
    <ligand>
        <name>AMP</name>
        <dbReference type="ChEBI" id="CHEBI:456215"/>
    </ligand>
</feature>
<feature type="binding site" evidence="1">
    <location>
        <position position="92"/>
    </location>
    <ligand>
        <name>AMP</name>
        <dbReference type="ChEBI" id="CHEBI:456215"/>
    </ligand>
</feature>
<feature type="binding site" evidence="1">
    <location>
        <position position="127"/>
    </location>
    <ligand>
        <name>ATP</name>
        <dbReference type="ChEBI" id="CHEBI:30616"/>
    </ligand>
</feature>
<feature type="binding site" evidence="1">
    <location>
        <position position="139"/>
    </location>
    <ligand>
        <name>AMP</name>
        <dbReference type="ChEBI" id="CHEBI:456215"/>
    </ligand>
</feature>
<feature type="binding site" evidence="1">
    <location>
        <position position="150"/>
    </location>
    <ligand>
        <name>AMP</name>
        <dbReference type="ChEBI" id="CHEBI:456215"/>
    </ligand>
</feature>
<feature type="binding site" evidence="1">
    <location>
        <position position="178"/>
    </location>
    <ligand>
        <name>ATP</name>
        <dbReference type="ChEBI" id="CHEBI:30616"/>
    </ligand>
</feature>
<proteinExistence type="inferred from homology"/>
<reference key="1">
    <citation type="journal article" date="2000" name="DNA Res.">
        <title>Complete genome structure of the nitrogen-fixing symbiotic bacterium Mesorhizobium loti.</title>
        <authorList>
            <person name="Kaneko T."/>
            <person name="Nakamura Y."/>
            <person name="Sato S."/>
            <person name="Asamizu E."/>
            <person name="Kato T."/>
            <person name="Sasamoto S."/>
            <person name="Watanabe A."/>
            <person name="Idesawa K."/>
            <person name="Ishikawa A."/>
            <person name="Kawashima K."/>
            <person name="Kimura T."/>
            <person name="Kishida Y."/>
            <person name="Kiyokawa C."/>
            <person name="Kohara M."/>
            <person name="Matsumoto M."/>
            <person name="Matsuno A."/>
            <person name="Mochizuki Y."/>
            <person name="Nakayama S."/>
            <person name="Nakazaki N."/>
            <person name="Shimpo S."/>
            <person name="Sugimoto M."/>
            <person name="Takeuchi C."/>
            <person name="Yamada M."/>
            <person name="Tabata S."/>
        </authorList>
    </citation>
    <scope>NUCLEOTIDE SEQUENCE [LARGE SCALE GENOMIC DNA]</scope>
    <source>
        <strain>LMG 29417 / CECT 9101 / MAFF 303099</strain>
    </source>
</reference>